<keyword id="KW-1185">Reference proteome</keyword>
<keyword id="KW-0732">Signal</keyword>
<evidence type="ECO:0000255" key="1"/>
<evidence type="ECO:0000305" key="2"/>
<protein>
    <recommendedName>
        <fullName>Uncharacterized protein Mb3455c</fullName>
    </recommendedName>
</protein>
<sequence length="211" mass="21572">MSRVQISTVLAIDTATPAVTAGIVRRHDLVVLGERVTVDARAHAERLTPNVLAALADAALTMADLDAVVVGCGPGPFTGLRAGMASAAAYGHALGIPVYGVCSLDAIGGQTIGDTLVVTDARRREVYWARYCDGIRTVGPAVNAAADVDPGPALAVAGAPEHAALFALPCVEPSRPSPAGLVAAVNWADKPAPLVPLYLRRPDAKPLAVCT</sequence>
<organism>
    <name type="scientific">Mycobacterium bovis (strain ATCC BAA-935 / AF2122/97)</name>
    <dbReference type="NCBI Taxonomy" id="233413"/>
    <lineage>
        <taxon>Bacteria</taxon>
        <taxon>Bacillati</taxon>
        <taxon>Actinomycetota</taxon>
        <taxon>Actinomycetes</taxon>
        <taxon>Mycobacteriales</taxon>
        <taxon>Mycobacteriaceae</taxon>
        <taxon>Mycobacterium</taxon>
        <taxon>Mycobacterium tuberculosis complex</taxon>
    </lineage>
</organism>
<comment type="similarity">
    <text evidence="2">To M.leprae ML0378.</text>
</comment>
<accession>P65084</accession>
<accession>A0A1R3Y456</accession>
<accession>Q50707</accession>
<accession>X2BPJ0</accession>
<name>Y3455_MYCBO</name>
<reference key="1">
    <citation type="journal article" date="2003" name="Proc. Natl. Acad. Sci. U.S.A.">
        <title>The complete genome sequence of Mycobacterium bovis.</title>
        <authorList>
            <person name="Garnier T."/>
            <person name="Eiglmeier K."/>
            <person name="Camus J.-C."/>
            <person name="Medina N."/>
            <person name="Mansoor H."/>
            <person name="Pryor M."/>
            <person name="Duthoy S."/>
            <person name="Grondin S."/>
            <person name="Lacroix C."/>
            <person name="Monsempe C."/>
            <person name="Simon S."/>
            <person name="Harris B."/>
            <person name="Atkin R."/>
            <person name="Doggett J."/>
            <person name="Mayes R."/>
            <person name="Keating L."/>
            <person name="Wheeler P.R."/>
            <person name="Parkhill J."/>
            <person name="Barrell B.G."/>
            <person name="Cole S.T."/>
            <person name="Gordon S.V."/>
            <person name="Hewinson R.G."/>
        </authorList>
    </citation>
    <scope>NUCLEOTIDE SEQUENCE [LARGE SCALE GENOMIC DNA]</scope>
    <source>
        <strain>ATCC BAA-935 / AF2122/97</strain>
    </source>
</reference>
<reference key="2">
    <citation type="journal article" date="2017" name="Genome Announc.">
        <title>Updated reference genome sequence and annotation of Mycobacterium bovis AF2122/97.</title>
        <authorList>
            <person name="Malone K.M."/>
            <person name="Farrell D."/>
            <person name="Stuber T.P."/>
            <person name="Schubert O.T."/>
            <person name="Aebersold R."/>
            <person name="Robbe-Austerman S."/>
            <person name="Gordon S.V."/>
        </authorList>
    </citation>
    <scope>NUCLEOTIDE SEQUENCE [LARGE SCALE GENOMIC DNA]</scope>
    <scope>GENOME REANNOTATION</scope>
    <source>
        <strain>ATCC BAA-935 / AF2122/97</strain>
    </source>
</reference>
<gene>
    <name type="ordered locus">BQ2027_MB3455C</name>
</gene>
<proteinExistence type="inferred from homology"/>
<dbReference type="EMBL" id="LT708304">
    <property type="protein sequence ID" value="SIU02083.1"/>
    <property type="molecule type" value="Genomic_DNA"/>
</dbReference>
<dbReference type="RefSeq" id="NP_857095.1">
    <property type="nucleotide sequence ID" value="NC_002945.3"/>
</dbReference>
<dbReference type="SMR" id="P65084"/>
<dbReference type="KEGG" id="mbo:BQ2027_MB3455C"/>
<dbReference type="PATRIC" id="fig|233413.5.peg.3790"/>
<dbReference type="Proteomes" id="UP000001419">
    <property type="component" value="Chromosome"/>
</dbReference>
<dbReference type="GO" id="GO:0005829">
    <property type="term" value="C:cytosol"/>
    <property type="evidence" value="ECO:0007669"/>
    <property type="project" value="TreeGrafter"/>
</dbReference>
<dbReference type="GO" id="GO:0002949">
    <property type="term" value="P:tRNA threonylcarbamoyladenosine modification"/>
    <property type="evidence" value="ECO:0007669"/>
    <property type="project" value="InterPro"/>
</dbReference>
<dbReference type="CDD" id="cd24032">
    <property type="entry name" value="ASKHA_NBD_TsaB"/>
    <property type="match status" value="1"/>
</dbReference>
<dbReference type="Gene3D" id="3.30.420.40">
    <property type="match status" value="1"/>
</dbReference>
<dbReference type="InterPro" id="IPR043129">
    <property type="entry name" value="ATPase_NBD"/>
</dbReference>
<dbReference type="InterPro" id="IPR000905">
    <property type="entry name" value="Gcp-like_dom"/>
</dbReference>
<dbReference type="InterPro" id="IPR022496">
    <property type="entry name" value="T6A_TsaB"/>
</dbReference>
<dbReference type="NCBIfam" id="TIGR03725">
    <property type="entry name" value="T6A_YeaZ"/>
    <property type="match status" value="1"/>
</dbReference>
<dbReference type="PANTHER" id="PTHR11735">
    <property type="entry name" value="TRNA N6-ADENOSINE THREONYLCARBAMOYLTRANSFERASE"/>
    <property type="match status" value="1"/>
</dbReference>
<dbReference type="PANTHER" id="PTHR11735:SF11">
    <property type="entry name" value="TRNA THREONYLCARBAMOYLADENOSINE BIOSYNTHESIS PROTEIN TSAB"/>
    <property type="match status" value="1"/>
</dbReference>
<dbReference type="Pfam" id="PF00814">
    <property type="entry name" value="TsaD"/>
    <property type="match status" value="1"/>
</dbReference>
<dbReference type="SUPFAM" id="SSF53067">
    <property type="entry name" value="Actin-like ATPase domain"/>
    <property type="match status" value="2"/>
</dbReference>
<feature type="signal peptide" evidence="1">
    <location>
        <begin position="1"/>
        <end position="20"/>
    </location>
</feature>
<feature type="chain" id="PRO_0000014154" description="Uncharacterized protein Mb3455c">
    <location>
        <begin position="21"/>
        <end position="211"/>
    </location>
</feature>